<name>KS6A6_MOUSE</name>
<reference key="1">
    <citation type="journal article" date="2005" name="Science">
        <title>The transcriptional landscape of the mammalian genome.</title>
        <authorList>
            <person name="Carninci P."/>
            <person name="Kasukawa T."/>
            <person name="Katayama S."/>
            <person name="Gough J."/>
            <person name="Frith M.C."/>
            <person name="Maeda N."/>
            <person name="Oyama R."/>
            <person name="Ravasi T."/>
            <person name="Lenhard B."/>
            <person name="Wells C."/>
            <person name="Kodzius R."/>
            <person name="Shimokawa K."/>
            <person name="Bajic V.B."/>
            <person name="Brenner S.E."/>
            <person name="Batalov S."/>
            <person name="Forrest A.R."/>
            <person name="Zavolan M."/>
            <person name="Davis M.J."/>
            <person name="Wilming L.G."/>
            <person name="Aidinis V."/>
            <person name="Allen J.E."/>
            <person name="Ambesi-Impiombato A."/>
            <person name="Apweiler R."/>
            <person name="Aturaliya R.N."/>
            <person name="Bailey T.L."/>
            <person name="Bansal M."/>
            <person name="Baxter L."/>
            <person name="Beisel K.W."/>
            <person name="Bersano T."/>
            <person name="Bono H."/>
            <person name="Chalk A.M."/>
            <person name="Chiu K.P."/>
            <person name="Choudhary V."/>
            <person name="Christoffels A."/>
            <person name="Clutterbuck D.R."/>
            <person name="Crowe M.L."/>
            <person name="Dalla E."/>
            <person name="Dalrymple B.P."/>
            <person name="de Bono B."/>
            <person name="Della Gatta G."/>
            <person name="di Bernardo D."/>
            <person name="Down T."/>
            <person name="Engstrom P."/>
            <person name="Fagiolini M."/>
            <person name="Faulkner G."/>
            <person name="Fletcher C.F."/>
            <person name="Fukushima T."/>
            <person name="Furuno M."/>
            <person name="Futaki S."/>
            <person name="Gariboldi M."/>
            <person name="Georgii-Hemming P."/>
            <person name="Gingeras T.R."/>
            <person name="Gojobori T."/>
            <person name="Green R.E."/>
            <person name="Gustincich S."/>
            <person name="Harbers M."/>
            <person name="Hayashi Y."/>
            <person name="Hensch T.K."/>
            <person name="Hirokawa N."/>
            <person name="Hill D."/>
            <person name="Huminiecki L."/>
            <person name="Iacono M."/>
            <person name="Ikeo K."/>
            <person name="Iwama A."/>
            <person name="Ishikawa T."/>
            <person name="Jakt M."/>
            <person name="Kanapin A."/>
            <person name="Katoh M."/>
            <person name="Kawasawa Y."/>
            <person name="Kelso J."/>
            <person name="Kitamura H."/>
            <person name="Kitano H."/>
            <person name="Kollias G."/>
            <person name="Krishnan S.P."/>
            <person name="Kruger A."/>
            <person name="Kummerfeld S.K."/>
            <person name="Kurochkin I.V."/>
            <person name="Lareau L.F."/>
            <person name="Lazarevic D."/>
            <person name="Lipovich L."/>
            <person name="Liu J."/>
            <person name="Liuni S."/>
            <person name="McWilliam S."/>
            <person name="Madan Babu M."/>
            <person name="Madera M."/>
            <person name="Marchionni L."/>
            <person name="Matsuda H."/>
            <person name="Matsuzawa S."/>
            <person name="Miki H."/>
            <person name="Mignone F."/>
            <person name="Miyake S."/>
            <person name="Morris K."/>
            <person name="Mottagui-Tabar S."/>
            <person name="Mulder N."/>
            <person name="Nakano N."/>
            <person name="Nakauchi H."/>
            <person name="Ng P."/>
            <person name="Nilsson R."/>
            <person name="Nishiguchi S."/>
            <person name="Nishikawa S."/>
            <person name="Nori F."/>
            <person name="Ohara O."/>
            <person name="Okazaki Y."/>
            <person name="Orlando V."/>
            <person name="Pang K.C."/>
            <person name="Pavan W.J."/>
            <person name="Pavesi G."/>
            <person name="Pesole G."/>
            <person name="Petrovsky N."/>
            <person name="Piazza S."/>
            <person name="Reed J."/>
            <person name="Reid J.F."/>
            <person name="Ring B.Z."/>
            <person name="Ringwald M."/>
            <person name="Rost B."/>
            <person name="Ruan Y."/>
            <person name="Salzberg S.L."/>
            <person name="Sandelin A."/>
            <person name="Schneider C."/>
            <person name="Schoenbach C."/>
            <person name="Sekiguchi K."/>
            <person name="Semple C.A."/>
            <person name="Seno S."/>
            <person name="Sessa L."/>
            <person name="Sheng Y."/>
            <person name="Shibata Y."/>
            <person name="Shimada H."/>
            <person name="Shimada K."/>
            <person name="Silva D."/>
            <person name="Sinclair B."/>
            <person name="Sperling S."/>
            <person name="Stupka E."/>
            <person name="Sugiura K."/>
            <person name="Sultana R."/>
            <person name="Takenaka Y."/>
            <person name="Taki K."/>
            <person name="Tammoja K."/>
            <person name="Tan S.L."/>
            <person name="Tang S."/>
            <person name="Taylor M.S."/>
            <person name="Tegner J."/>
            <person name="Teichmann S.A."/>
            <person name="Ueda H.R."/>
            <person name="van Nimwegen E."/>
            <person name="Verardo R."/>
            <person name="Wei C.L."/>
            <person name="Yagi K."/>
            <person name="Yamanishi H."/>
            <person name="Zabarovsky E."/>
            <person name="Zhu S."/>
            <person name="Zimmer A."/>
            <person name="Hide W."/>
            <person name="Bult C."/>
            <person name="Grimmond S.M."/>
            <person name="Teasdale R.D."/>
            <person name="Liu E.T."/>
            <person name="Brusic V."/>
            <person name="Quackenbush J."/>
            <person name="Wahlestedt C."/>
            <person name="Mattick J.S."/>
            <person name="Hume D.A."/>
            <person name="Kai C."/>
            <person name="Sasaki D."/>
            <person name="Tomaru Y."/>
            <person name="Fukuda S."/>
            <person name="Kanamori-Katayama M."/>
            <person name="Suzuki M."/>
            <person name="Aoki J."/>
            <person name="Arakawa T."/>
            <person name="Iida J."/>
            <person name="Imamura K."/>
            <person name="Itoh M."/>
            <person name="Kato T."/>
            <person name="Kawaji H."/>
            <person name="Kawagashira N."/>
            <person name="Kawashima T."/>
            <person name="Kojima M."/>
            <person name="Kondo S."/>
            <person name="Konno H."/>
            <person name="Nakano K."/>
            <person name="Ninomiya N."/>
            <person name="Nishio T."/>
            <person name="Okada M."/>
            <person name="Plessy C."/>
            <person name="Shibata K."/>
            <person name="Shiraki T."/>
            <person name="Suzuki S."/>
            <person name="Tagami M."/>
            <person name="Waki K."/>
            <person name="Watahiki A."/>
            <person name="Okamura-Oho Y."/>
            <person name="Suzuki H."/>
            <person name="Kawai J."/>
            <person name="Hayashizaki Y."/>
        </authorList>
    </citation>
    <scope>NUCLEOTIDE SEQUENCE [LARGE SCALE MRNA] (ISOFORMS 1 AND 3)</scope>
    <source>
        <strain>C57BL/6J</strain>
        <tissue>Embryo</tissue>
        <tissue>Testis</tissue>
    </source>
</reference>
<reference key="2">
    <citation type="journal article" date="2004" name="Genome Res.">
        <title>The status, quality, and expansion of the NIH full-length cDNA project: the Mammalian Gene Collection (MGC).</title>
        <authorList>
            <consortium name="The MGC Project Team"/>
        </authorList>
    </citation>
    <scope>NUCLEOTIDE SEQUENCE [LARGE SCALE MRNA] (ISOFORM 2)</scope>
    <source>
        <strain>C57BL/6J</strain>
        <tissue>Embryo</tissue>
    </source>
</reference>
<reference key="3">
    <citation type="journal article" date="2004" name="Mol. Cell. Biol.">
        <title>Characterization of mouse Rsk4 as an inhibitor of fibroblast growth factor-RAS-extracellular signal-regulated kinase signaling.</title>
        <authorList>
            <person name="Myers A.P."/>
            <person name="Corson L.B."/>
            <person name="Rossant J."/>
            <person name="Baker J.C."/>
        </authorList>
    </citation>
    <scope>FUNCTION IN EMBRYOGENESIS</scope>
</reference>
<reference key="4">
    <citation type="journal article" date="2010" name="Cell">
        <title>A tissue-specific atlas of mouse protein phosphorylation and expression.</title>
        <authorList>
            <person name="Huttlin E.L."/>
            <person name="Jedrychowski M.P."/>
            <person name="Elias J.E."/>
            <person name="Goswami T."/>
            <person name="Rad R."/>
            <person name="Beausoleil S.A."/>
            <person name="Villen J."/>
            <person name="Haas W."/>
            <person name="Sowa M.E."/>
            <person name="Gygi S.P."/>
        </authorList>
    </citation>
    <scope>PHOSPHORYLATION [LARGE SCALE ANALYSIS] AT SER-409</scope>
    <scope>IDENTIFICATION BY MASS SPECTROMETRY [LARGE SCALE ANALYSIS]</scope>
    <source>
        <tissue>Kidney</tissue>
    </source>
</reference>
<proteinExistence type="evidence at protein level"/>
<evidence type="ECO:0000250" key="1"/>
<evidence type="ECO:0000250" key="2">
    <source>
        <dbReference type="UniProtKB" id="Q9UK32"/>
    </source>
</evidence>
<evidence type="ECO:0000255" key="3">
    <source>
        <dbReference type="PROSITE-ProRule" id="PRU00159"/>
    </source>
</evidence>
<evidence type="ECO:0000255" key="4">
    <source>
        <dbReference type="PROSITE-ProRule" id="PRU00618"/>
    </source>
</evidence>
<evidence type="ECO:0000256" key="5">
    <source>
        <dbReference type="SAM" id="MobiDB-lite"/>
    </source>
</evidence>
<evidence type="ECO:0000269" key="6">
    <source>
    </source>
</evidence>
<evidence type="ECO:0000303" key="7">
    <source>
    </source>
</evidence>
<evidence type="ECO:0000303" key="8">
    <source>
    </source>
</evidence>
<evidence type="ECO:0000305" key="9"/>
<evidence type="ECO:0007744" key="10">
    <source>
    </source>
</evidence>
<keyword id="KW-0025">Alternative splicing</keyword>
<keyword id="KW-0067">ATP-binding</keyword>
<keyword id="KW-0963">Cytoplasm</keyword>
<keyword id="KW-0418">Kinase</keyword>
<keyword id="KW-0460">Magnesium</keyword>
<keyword id="KW-0479">Metal-binding</keyword>
<keyword id="KW-0547">Nucleotide-binding</keyword>
<keyword id="KW-0539">Nucleus</keyword>
<keyword id="KW-0597">Phosphoprotein</keyword>
<keyword id="KW-1185">Reference proteome</keyword>
<keyword id="KW-0677">Repeat</keyword>
<keyword id="KW-0723">Serine/threonine-protein kinase</keyword>
<keyword id="KW-0808">Transferase</keyword>
<comment type="function">
    <text evidence="6">Constitutively active serine/threonine-protein kinase that exhibits growth-factor-independent kinase activity and that may participate in p53/TP53-dependent cell growth arrest signaling and play an inhibitory role during embryogenesis.</text>
</comment>
<comment type="catalytic activity">
    <reaction>
        <text>L-seryl-[protein] + ATP = O-phospho-L-seryl-[protein] + ADP + H(+)</text>
        <dbReference type="Rhea" id="RHEA:17989"/>
        <dbReference type="Rhea" id="RHEA-COMP:9863"/>
        <dbReference type="Rhea" id="RHEA-COMP:11604"/>
        <dbReference type="ChEBI" id="CHEBI:15378"/>
        <dbReference type="ChEBI" id="CHEBI:29999"/>
        <dbReference type="ChEBI" id="CHEBI:30616"/>
        <dbReference type="ChEBI" id="CHEBI:83421"/>
        <dbReference type="ChEBI" id="CHEBI:456216"/>
        <dbReference type="EC" id="2.7.11.1"/>
    </reaction>
</comment>
<comment type="catalytic activity">
    <reaction>
        <text>L-threonyl-[protein] + ATP = O-phospho-L-threonyl-[protein] + ADP + H(+)</text>
        <dbReference type="Rhea" id="RHEA:46608"/>
        <dbReference type="Rhea" id="RHEA-COMP:11060"/>
        <dbReference type="Rhea" id="RHEA-COMP:11605"/>
        <dbReference type="ChEBI" id="CHEBI:15378"/>
        <dbReference type="ChEBI" id="CHEBI:30013"/>
        <dbReference type="ChEBI" id="CHEBI:30616"/>
        <dbReference type="ChEBI" id="CHEBI:61977"/>
        <dbReference type="ChEBI" id="CHEBI:456216"/>
        <dbReference type="EC" id="2.7.11.1"/>
    </reaction>
</comment>
<comment type="cofactor">
    <cofactor evidence="1">
        <name>Mg(2+)</name>
        <dbReference type="ChEBI" id="CHEBI:18420"/>
    </cofactor>
</comment>
<comment type="activity regulation">
    <text evidence="1">Constitutively activated by phosphorylation at Ser-252, Ser-392, and Ser-409 in serum-starved cells. Does not require growth factor stimulation for significant kinase activity (By similarity).</text>
</comment>
<comment type="subunit">
    <text evidence="1">Forms a complex with MAPK3/ERK1 but not with MAPK9 or MAPK14 in serum-starved cells.</text>
</comment>
<comment type="subcellular location">
    <subcellularLocation>
        <location>Cytoplasm</location>
        <location>Cytosol</location>
    </subcellularLocation>
    <subcellularLocation>
        <location>Nucleus</location>
    </subcellularLocation>
    <text evidence="1">Predominantly cytosolic.</text>
</comment>
<comment type="alternative products">
    <event type="alternative splicing"/>
    <isoform>
        <id>Q7TPS0-1</id>
        <name>1</name>
        <sequence type="displayed"/>
    </isoform>
    <isoform>
        <id>Q7TPS0-2</id>
        <name>2</name>
        <sequence type="described" ref="VSP_023129"/>
    </isoform>
    <isoform>
        <id>Q7TPS0-3</id>
        <name>3</name>
        <sequence type="described" ref="VSP_023128"/>
    </isoform>
</comment>
<comment type="PTM">
    <text evidence="1">Phosphorylated at Ser-252, Ser-392, and Ser-409 in serum-starved cells.</text>
</comment>
<comment type="similarity">
    <text evidence="9">Belongs to the protein kinase superfamily. AGC Ser/Thr protein kinase family. S6 kinase subfamily.</text>
</comment>
<comment type="sequence caution" evidence="9">
    <conflict type="frameshift">
        <sequence resource="EMBL-CDS" id="BAC33698"/>
    </conflict>
</comment>
<feature type="chain" id="PRO_0000278162" description="Ribosomal protein S6 kinase alpha-6">
    <location>
        <begin position="1"/>
        <end position="764"/>
    </location>
</feature>
<feature type="domain" description="Protein kinase 1" evidence="3">
    <location>
        <begin position="93"/>
        <end position="350"/>
    </location>
</feature>
<feature type="domain" description="AGC-kinase C-terminal" evidence="4">
    <location>
        <begin position="351"/>
        <end position="420"/>
    </location>
</feature>
<feature type="domain" description="Protein kinase 2" evidence="3">
    <location>
        <begin position="446"/>
        <end position="706"/>
    </location>
</feature>
<feature type="region of interest" description="Disordered" evidence="5">
    <location>
        <begin position="1"/>
        <end position="24"/>
    </location>
</feature>
<feature type="active site" description="Proton acceptor" evidence="1">
    <location>
        <position position="218"/>
    </location>
</feature>
<feature type="active site" description="Proton acceptor" evidence="1">
    <location>
        <position position="563"/>
    </location>
</feature>
<feature type="binding site" evidence="3">
    <location>
        <begin position="99"/>
        <end position="107"/>
    </location>
    <ligand>
        <name>ATP</name>
        <dbReference type="ChEBI" id="CHEBI:30616"/>
    </ligand>
</feature>
<feature type="binding site" evidence="3">
    <location>
        <position position="125"/>
    </location>
    <ligand>
        <name>ATP</name>
        <dbReference type="ChEBI" id="CHEBI:30616"/>
    </ligand>
</feature>
<feature type="binding site" evidence="3">
    <location>
        <begin position="452"/>
        <end position="460"/>
    </location>
    <ligand>
        <name>ATP</name>
        <dbReference type="ChEBI" id="CHEBI:30616"/>
    </ligand>
</feature>
<feature type="binding site" evidence="3">
    <location>
        <position position="475"/>
    </location>
    <ligand>
        <name>ATP</name>
        <dbReference type="ChEBI" id="CHEBI:30616"/>
    </ligand>
</feature>
<feature type="modified residue" description="Phosphoserine" evidence="2">
    <location>
        <position position="252"/>
    </location>
</feature>
<feature type="modified residue" description="Phosphoserine" evidence="2">
    <location>
        <position position="392"/>
    </location>
</feature>
<feature type="modified residue" description="Phosphoserine" evidence="10">
    <location>
        <position position="409"/>
    </location>
</feature>
<feature type="modified residue" description="Phosphothreonine" evidence="2">
    <location>
        <position position="601"/>
    </location>
</feature>
<feature type="splice variant" id="VSP_023128" description="In isoform 3." evidence="8">
    <location>
        <begin position="613"/>
        <end position="617"/>
    </location>
</feature>
<feature type="splice variant" id="VSP_023129" description="In isoform 2." evidence="7">
    <location>
        <begin position="678"/>
        <end position="721"/>
    </location>
</feature>
<feature type="sequence conflict" description="In Ref. 1; BAC33698." evidence="9" ref="1">
    <original>V</original>
    <variation>I</variation>
    <location>
        <position position="75"/>
    </location>
</feature>
<feature type="sequence conflict" description="In Ref. 1; BAC33698." evidence="9" ref="1">
    <original>T</original>
    <variation>S</variation>
    <location>
        <position position="164"/>
    </location>
</feature>
<feature type="sequence conflict" description="In Ref. 1; BAC33698." evidence="9" ref="1">
    <original>A</original>
    <variation>G</variation>
    <location>
        <position position="269"/>
    </location>
</feature>
<feature type="sequence conflict" description="In Ref. 1; AK012150." evidence="9" ref="1">
    <original>ED</original>
    <variation>KR</variation>
    <location>
        <begin position="450"/>
        <end position="451"/>
    </location>
</feature>
<feature type="sequence conflict" description="In Ref. 1; BAB29568." evidence="9" ref="1">
    <original>L</original>
    <variation>M</variation>
    <location>
        <position position="632"/>
    </location>
</feature>
<feature type="sequence conflict" description="In Ref. 1; BAC33698." evidence="9" ref="1">
    <original>I</original>
    <variation>V</variation>
    <location>
        <position position="657"/>
    </location>
</feature>
<protein>
    <recommendedName>
        <fullName>Ribosomal protein S6 kinase alpha-6</fullName>
        <shortName>S6K-alpha-6</shortName>
        <ecNumber>2.7.11.1</ecNumber>
    </recommendedName>
</protein>
<accession>Q7TPS0</accession>
<accession>Q8BWZ2</accession>
<accession>Q9CUR6</accession>
<organism>
    <name type="scientific">Mus musculus</name>
    <name type="common">Mouse</name>
    <dbReference type="NCBI Taxonomy" id="10090"/>
    <lineage>
        <taxon>Eukaryota</taxon>
        <taxon>Metazoa</taxon>
        <taxon>Chordata</taxon>
        <taxon>Craniata</taxon>
        <taxon>Vertebrata</taxon>
        <taxon>Euteleostomi</taxon>
        <taxon>Mammalia</taxon>
        <taxon>Eutheria</taxon>
        <taxon>Euarchontoglires</taxon>
        <taxon>Glires</taxon>
        <taxon>Rodentia</taxon>
        <taxon>Myomorpha</taxon>
        <taxon>Muroidea</taxon>
        <taxon>Muridae</taxon>
        <taxon>Murinae</taxon>
        <taxon>Mus</taxon>
        <taxon>Mus</taxon>
    </lineage>
</organism>
<dbReference type="EC" id="2.7.11.1"/>
<dbReference type="EMBL" id="AK012150">
    <property type="status" value="NOT_ANNOTATED_CDS"/>
    <property type="molecule type" value="mRNA"/>
</dbReference>
<dbReference type="EMBL" id="AK014822">
    <property type="protein sequence ID" value="BAB29568.2"/>
    <property type="molecule type" value="mRNA"/>
</dbReference>
<dbReference type="EMBL" id="AK049349">
    <property type="protein sequence ID" value="BAC33698.1"/>
    <property type="status" value="ALT_SEQ"/>
    <property type="molecule type" value="mRNA"/>
</dbReference>
<dbReference type="EMBL" id="BC054113">
    <property type="protein sequence ID" value="AAH54113.1"/>
    <property type="molecule type" value="mRNA"/>
</dbReference>
<dbReference type="RefSeq" id="NP_080225.2">
    <property type="nucleotide sequence ID" value="NM_025949.3"/>
</dbReference>
<dbReference type="SMR" id="Q7TPS0"/>
<dbReference type="FunCoup" id="Q7TPS0">
    <property type="interactions" value="897"/>
</dbReference>
<dbReference type="STRING" id="10090.ENSMUSP00000080694"/>
<dbReference type="GlyGen" id="Q7TPS0">
    <property type="glycosylation" value="2 sites, 2 N-linked glycans (2 sites)"/>
</dbReference>
<dbReference type="iPTMnet" id="Q7TPS0"/>
<dbReference type="PhosphoSitePlus" id="Q7TPS0"/>
<dbReference type="jPOST" id="Q7TPS0"/>
<dbReference type="PaxDb" id="10090-ENSMUSP00000080694"/>
<dbReference type="ProteomicsDB" id="263467">
    <molecule id="Q7TPS0-1"/>
</dbReference>
<dbReference type="ProteomicsDB" id="263468">
    <molecule id="Q7TPS0-2"/>
</dbReference>
<dbReference type="ProteomicsDB" id="263469">
    <molecule id="Q7TPS0-3"/>
</dbReference>
<dbReference type="DNASU" id="67071"/>
<dbReference type="GeneID" id="67071"/>
<dbReference type="KEGG" id="mmu:67071"/>
<dbReference type="AGR" id="MGI:1914321"/>
<dbReference type="CTD" id="27330"/>
<dbReference type="MGI" id="MGI:1914321">
    <property type="gene designation" value="Rps6ka6"/>
</dbReference>
<dbReference type="eggNOG" id="KOG0603">
    <property type="taxonomic scope" value="Eukaryota"/>
</dbReference>
<dbReference type="InParanoid" id="Q7TPS0"/>
<dbReference type="OrthoDB" id="63267at2759"/>
<dbReference type="Reactome" id="R-MMU-442742">
    <property type="pathway name" value="CREB1 phosphorylation through NMDA receptor-mediated activation of RAS signaling"/>
</dbReference>
<dbReference type="Reactome" id="R-MMU-444257">
    <property type="pathway name" value="RSK activation"/>
</dbReference>
<dbReference type="BioGRID-ORCS" id="67071">
    <property type="hits" value="1 hit in 81 CRISPR screens"/>
</dbReference>
<dbReference type="ChiTaRS" id="Rps6ka6">
    <property type="organism name" value="mouse"/>
</dbReference>
<dbReference type="PRO" id="PR:Q7TPS0"/>
<dbReference type="Proteomes" id="UP000000589">
    <property type="component" value="Unplaced"/>
</dbReference>
<dbReference type="RNAct" id="Q7TPS0">
    <property type="molecule type" value="protein"/>
</dbReference>
<dbReference type="GO" id="GO:0005829">
    <property type="term" value="C:cytosol"/>
    <property type="evidence" value="ECO:0007669"/>
    <property type="project" value="UniProtKB-SubCell"/>
</dbReference>
<dbReference type="GO" id="GO:0005634">
    <property type="term" value="C:nucleus"/>
    <property type="evidence" value="ECO:0007669"/>
    <property type="project" value="UniProtKB-SubCell"/>
</dbReference>
<dbReference type="GO" id="GO:0045202">
    <property type="term" value="C:synapse"/>
    <property type="evidence" value="ECO:0000314"/>
    <property type="project" value="SynGO"/>
</dbReference>
<dbReference type="GO" id="GO:0005524">
    <property type="term" value="F:ATP binding"/>
    <property type="evidence" value="ECO:0007669"/>
    <property type="project" value="UniProtKB-KW"/>
</dbReference>
<dbReference type="GO" id="GO:0000287">
    <property type="term" value="F:magnesium ion binding"/>
    <property type="evidence" value="ECO:0007669"/>
    <property type="project" value="InterPro"/>
</dbReference>
<dbReference type="GO" id="GO:0106310">
    <property type="term" value="F:protein serine kinase activity"/>
    <property type="evidence" value="ECO:0007669"/>
    <property type="project" value="RHEA"/>
</dbReference>
<dbReference type="GO" id="GO:0004674">
    <property type="term" value="F:protein serine/threonine kinase activity"/>
    <property type="evidence" value="ECO:0007669"/>
    <property type="project" value="UniProtKB-KW"/>
</dbReference>
<dbReference type="GO" id="GO:0030330">
    <property type="term" value="P:DNA damage response, signal transduction by p53 class mediator"/>
    <property type="evidence" value="ECO:0000250"/>
    <property type="project" value="UniProtKB"/>
</dbReference>
<dbReference type="GO" id="GO:0045992">
    <property type="term" value="P:negative regulation of embryonic development"/>
    <property type="evidence" value="ECO:0000314"/>
    <property type="project" value="UniProtKB"/>
</dbReference>
<dbReference type="GO" id="GO:0070373">
    <property type="term" value="P:negative regulation of ERK1 and ERK2 cascade"/>
    <property type="evidence" value="ECO:0000314"/>
    <property type="project" value="UniProtKB"/>
</dbReference>
<dbReference type="GO" id="GO:2000381">
    <property type="term" value="P:negative regulation of mesoderm development"/>
    <property type="evidence" value="ECO:0000314"/>
    <property type="project" value="UniProtKB"/>
</dbReference>
<dbReference type="CDD" id="cd14091">
    <property type="entry name" value="STKc_RSK_C"/>
    <property type="match status" value="1"/>
</dbReference>
<dbReference type="CDD" id="cd05582">
    <property type="entry name" value="STKc_RSK_N"/>
    <property type="match status" value="1"/>
</dbReference>
<dbReference type="FunFam" id="1.10.510.10:FF:000010">
    <property type="entry name" value="Ribosomal protein S6 kinase"/>
    <property type="match status" value="1"/>
</dbReference>
<dbReference type="FunFam" id="1.10.510.10:FF:000041">
    <property type="entry name" value="Ribosomal protein S6 kinase"/>
    <property type="match status" value="1"/>
</dbReference>
<dbReference type="FunFam" id="3.30.200.20:FF:000013">
    <property type="entry name" value="Ribosomal protein S6 kinase"/>
    <property type="match status" value="1"/>
</dbReference>
<dbReference type="FunFam" id="3.30.200.20:FF:000121">
    <property type="entry name" value="Ribosomal protein S6 kinase"/>
    <property type="match status" value="1"/>
</dbReference>
<dbReference type="Gene3D" id="3.30.200.20">
    <property type="entry name" value="Phosphorylase Kinase, domain 1"/>
    <property type="match status" value="2"/>
</dbReference>
<dbReference type="Gene3D" id="1.10.510.10">
    <property type="entry name" value="Transferase(Phosphotransferase) domain 1"/>
    <property type="match status" value="2"/>
</dbReference>
<dbReference type="InterPro" id="IPR000961">
    <property type="entry name" value="AGC-kinase_C"/>
</dbReference>
<dbReference type="InterPro" id="IPR011009">
    <property type="entry name" value="Kinase-like_dom_sf"/>
</dbReference>
<dbReference type="InterPro" id="IPR017892">
    <property type="entry name" value="Pkinase_C"/>
</dbReference>
<dbReference type="InterPro" id="IPR000719">
    <property type="entry name" value="Prot_kinase_dom"/>
</dbReference>
<dbReference type="InterPro" id="IPR017441">
    <property type="entry name" value="Protein_kinase_ATP_BS"/>
</dbReference>
<dbReference type="InterPro" id="IPR016239">
    <property type="entry name" value="Ribosomal_S6_kinase_II"/>
</dbReference>
<dbReference type="InterPro" id="IPR041906">
    <property type="entry name" value="RSK_N"/>
</dbReference>
<dbReference type="InterPro" id="IPR008271">
    <property type="entry name" value="Ser/Thr_kinase_AS"/>
</dbReference>
<dbReference type="PANTHER" id="PTHR24351">
    <property type="entry name" value="RIBOSOMAL PROTEIN S6 KINASE"/>
    <property type="match status" value="1"/>
</dbReference>
<dbReference type="Pfam" id="PF00069">
    <property type="entry name" value="Pkinase"/>
    <property type="match status" value="2"/>
</dbReference>
<dbReference type="Pfam" id="PF00433">
    <property type="entry name" value="Pkinase_C"/>
    <property type="match status" value="1"/>
</dbReference>
<dbReference type="PIRSF" id="PIRSF000606">
    <property type="entry name" value="Ribsml_S6_kin_2"/>
    <property type="match status" value="1"/>
</dbReference>
<dbReference type="SMART" id="SM00133">
    <property type="entry name" value="S_TK_X"/>
    <property type="match status" value="1"/>
</dbReference>
<dbReference type="SMART" id="SM00220">
    <property type="entry name" value="S_TKc"/>
    <property type="match status" value="2"/>
</dbReference>
<dbReference type="SUPFAM" id="SSF56112">
    <property type="entry name" value="Protein kinase-like (PK-like)"/>
    <property type="match status" value="2"/>
</dbReference>
<dbReference type="PROSITE" id="PS51285">
    <property type="entry name" value="AGC_KINASE_CTER"/>
    <property type="match status" value="1"/>
</dbReference>
<dbReference type="PROSITE" id="PS00107">
    <property type="entry name" value="PROTEIN_KINASE_ATP"/>
    <property type="match status" value="2"/>
</dbReference>
<dbReference type="PROSITE" id="PS50011">
    <property type="entry name" value="PROTEIN_KINASE_DOM"/>
    <property type="match status" value="2"/>
</dbReference>
<dbReference type="PROSITE" id="PS00108">
    <property type="entry name" value="PROTEIN_KINASE_ST"/>
    <property type="match status" value="2"/>
</dbReference>
<sequence length="764" mass="86571">MLPFAPVEDPWDQEDMEVFGSTSSSEPQVVFTMKNAATVMREHERKEVNDLKMVDEPMEEGEPVSCRREELVKEVPITQHVKEGYEKADPAQFDLLKVLGQGSFGKVFLVRKKTGPDAGQLYAMKVLRKASLKVRDRVRTKMERDILVEVNHPFIVKLHYAFQTEGKLYLILDFLRGGDVFTRLSKEVLFTEEDVKFYLAELALALDHLHRLGIVYRDLKPENILLDEIGHIKLTDFGLSKESVDQEKKAYSFCGTVEYMAPEVVNRRAHSQSADWWSYGVLMFEMLTGTLPFQGKDRNETMNMILKAKLGMPQFLSAEAQSLLRMLFKRNPANRLGSEGVEEVKRHAFFASIDWNKLYKREVQPPFRPASGKPDDTFCFDPEFTAKTPKDSPGLPASANAHQLFKGFSFVATSIAEEYKITPVTSSNVLPIVQINGNAAQFSEAYELKEDIGIGSYSVCKRCIHSASNVEFAVKIIDKNKRDPSEEIEILMRYGQHPNIISLKEVFDDGKYVYLVTDLMKGGELLDRILKKKCFSEQEASNVLYVITKTVECLHSQGVVHRDLKPSNILYMDESAHPDSIKICDFGFAKQLRGENGLLLTPCYTANFVAPEVLTQQGYDAACDIWSLGVLLYTMLAGYTPFSNGPNDTPEEILLRIGNGRFSLSGGIWDNISRGAKDLLSHMLHMDPHQRYTAEQVLKHPWITQREQLPRHQPNSDEPPQEAVAAPYSVLARNPNRHHPILEPVTASRLAQRRNMKKRTSTGL</sequence>
<gene>
    <name type="primary">Rps6ka6</name>
</gene>